<accession>B8EJI5</accession>
<evidence type="ECO:0000255" key="1">
    <source>
        <dbReference type="HAMAP-Rule" id="MF_00031"/>
    </source>
</evidence>
<name>RUVA_METSB</name>
<organism>
    <name type="scientific">Methylocella silvestris (strain DSM 15510 / CIP 108128 / LMG 27833 / NCIMB 13906 / BL2)</name>
    <dbReference type="NCBI Taxonomy" id="395965"/>
    <lineage>
        <taxon>Bacteria</taxon>
        <taxon>Pseudomonadati</taxon>
        <taxon>Pseudomonadota</taxon>
        <taxon>Alphaproteobacteria</taxon>
        <taxon>Hyphomicrobiales</taxon>
        <taxon>Beijerinckiaceae</taxon>
        <taxon>Methylocella</taxon>
    </lineage>
</organism>
<gene>
    <name evidence="1" type="primary">ruvA</name>
    <name type="ordered locus">Msil_0003</name>
</gene>
<feature type="chain" id="PRO_1000195158" description="Holliday junction branch migration complex subunit RuvA">
    <location>
        <begin position="1"/>
        <end position="209"/>
    </location>
</feature>
<feature type="region of interest" description="Domain I" evidence="1">
    <location>
        <begin position="1"/>
        <end position="64"/>
    </location>
</feature>
<feature type="region of interest" description="Domain II" evidence="1">
    <location>
        <begin position="65"/>
        <end position="143"/>
    </location>
</feature>
<feature type="region of interest" description="Flexible linker" evidence="1">
    <location>
        <begin position="144"/>
        <end position="154"/>
    </location>
</feature>
<feature type="region of interest" description="Domain III" evidence="1">
    <location>
        <begin position="155"/>
        <end position="209"/>
    </location>
</feature>
<proteinExistence type="inferred from homology"/>
<reference key="1">
    <citation type="journal article" date="2010" name="J. Bacteriol.">
        <title>Complete genome sequence of the aerobic facultative methanotroph Methylocella silvestris BL2.</title>
        <authorList>
            <person name="Chen Y."/>
            <person name="Crombie A."/>
            <person name="Rahman M.T."/>
            <person name="Dedysh S.N."/>
            <person name="Liesack W."/>
            <person name="Stott M.B."/>
            <person name="Alam M."/>
            <person name="Theisen A.R."/>
            <person name="Murrell J.C."/>
            <person name="Dunfield P.F."/>
        </authorList>
    </citation>
    <scope>NUCLEOTIDE SEQUENCE [LARGE SCALE GENOMIC DNA]</scope>
    <source>
        <strain>DSM 15510 / CIP 108128 / LMG 27833 / NCIMB 13906 / BL2</strain>
    </source>
</reference>
<protein>
    <recommendedName>
        <fullName evidence="1">Holliday junction branch migration complex subunit RuvA</fullName>
    </recommendedName>
</protein>
<dbReference type="EMBL" id="CP001280">
    <property type="protein sequence ID" value="ACK48988.1"/>
    <property type="molecule type" value="Genomic_DNA"/>
</dbReference>
<dbReference type="RefSeq" id="WP_012589058.1">
    <property type="nucleotide sequence ID" value="NC_011666.1"/>
</dbReference>
<dbReference type="SMR" id="B8EJI5"/>
<dbReference type="STRING" id="395965.Msil_0003"/>
<dbReference type="KEGG" id="msl:Msil_0003"/>
<dbReference type="eggNOG" id="COG0632">
    <property type="taxonomic scope" value="Bacteria"/>
</dbReference>
<dbReference type="HOGENOM" id="CLU_087936_3_0_5"/>
<dbReference type="OrthoDB" id="5293449at2"/>
<dbReference type="Proteomes" id="UP000002257">
    <property type="component" value="Chromosome"/>
</dbReference>
<dbReference type="GO" id="GO:0005737">
    <property type="term" value="C:cytoplasm"/>
    <property type="evidence" value="ECO:0007669"/>
    <property type="project" value="UniProtKB-SubCell"/>
</dbReference>
<dbReference type="GO" id="GO:0048476">
    <property type="term" value="C:Holliday junction resolvase complex"/>
    <property type="evidence" value="ECO:0007669"/>
    <property type="project" value="UniProtKB-UniRule"/>
</dbReference>
<dbReference type="GO" id="GO:0005524">
    <property type="term" value="F:ATP binding"/>
    <property type="evidence" value="ECO:0007669"/>
    <property type="project" value="InterPro"/>
</dbReference>
<dbReference type="GO" id="GO:0000400">
    <property type="term" value="F:four-way junction DNA binding"/>
    <property type="evidence" value="ECO:0007669"/>
    <property type="project" value="UniProtKB-UniRule"/>
</dbReference>
<dbReference type="GO" id="GO:0009378">
    <property type="term" value="F:four-way junction helicase activity"/>
    <property type="evidence" value="ECO:0007669"/>
    <property type="project" value="InterPro"/>
</dbReference>
<dbReference type="GO" id="GO:0006310">
    <property type="term" value="P:DNA recombination"/>
    <property type="evidence" value="ECO:0007669"/>
    <property type="project" value="UniProtKB-UniRule"/>
</dbReference>
<dbReference type="GO" id="GO:0006281">
    <property type="term" value="P:DNA repair"/>
    <property type="evidence" value="ECO:0007669"/>
    <property type="project" value="UniProtKB-UniRule"/>
</dbReference>
<dbReference type="Gene3D" id="1.10.150.20">
    <property type="entry name" value="5' to 3' exonuclease, C-terminal subdomain"/>
    <property type="match status" value="1"/>
</dbReference>
<dbReference type="Gene3D" id="1.10.8.10">
    <property type="entry name" value="DNA helicase RuvA subunit, C-terminal domain"/>
    <property type="match status" value="1"/>
</dbReference>
<dbReference type="Gene3D" id="2.40.50.140">
    <property type="entry name" value="Nucleic acid-binding proteins"/>
    <property type="match status" value="1"/>
</dbReference>
<dbReference type="HAMAP" id="MF_00031">
    <property type="entry name" value="DNA_HJ_migration_RuvA"/>
    <property type="match status" value="1"/>
</dbReference>
<dbReference type="InterPro" id="IPR013849">
    <property type="entry name" value="DNA_helicase_Holl-junc_RuvA_I"/>
</dbReference>
<dbReference type="InterPro" id="IPR012340">
    <property type="entry name" value="NA-bd_OB-fold"/>
</dbReference>
<dbReference type="InterPro" id="IPR000085">
    <property type="entry name" value="RuvA"/>
</dbReference>
<dbReference type="InterPro" id="IPR010994">
    <property type="entry name" value="RuvA_2-like"/>
</dbReference>
<dbReference type="InterPro" id="IPR036267">
    <property type="entry name" value="RuvA_C_sf"/>
</dbReference>
<dbReference type="NCBIfam" id="TIGR00084">
    <property type="entry name" value="ruvA"/>
    <property type="match status" value="1"/>
</dbReference>
<dbReference type="Pfam" id="PF14520">
    <property type="entry name" value="HHH_5"/>
    <property type="match status" value="1"/>
</dbReference>
<dbReference type="Pfam" id="PF01330">
    <property type="entry name" value="RuvA_N"/>
    <property type="match status" value="1"/>
</dbReference>
<dbReference type="SUPFAM" id="SSF46929">
    <property type="entry name" value="DNA helicase RuvA subunit, C-terminal domain"/>
    <property type="match status" value="1"/>
</dbReference>
<dbReference type="SUPFAM" id="SSF50249">
    <property type="entry name" value="Nucleic acid-binding proteins"/>
    <property type="match status" value="1"/>
</dbReference>
<dbReference type="SUPFAM" id="SSF47781">
    <property type="entry name" value="RuvA domain 2-like"/>
    <property type="match status" value="1"/>
</dbReference>
<sequence>MIGKLKGLVDSQGEDYVILDVNGVGYVVHCSSRTLQNLPPQGQATALAIDTQMREDSIKLYGFASETEREWFRLLQSVQGVGAKVALAIQGVLRPGEIVTAIAAQDRAAFARASGVGAKLAARILAELKDKAPALGASLHTLAGAGSEGAGVEAPASGAVSDAISVLVNLGFGRSQAAVAVAASSKALGSGAGAGDLAKRALQELAQSG</sequence>
<keyword id="KW-0963">Cytoplasm</keyword>
<keyword id="KW-0227">DNA damage</keyword>
<keyword id="KW-0233">DNA recombination</keyword>
<keyword id="KW-0234">DNA repair</keyword>
<keyword id="KW-0238">DNA-binding</keyword>
<keyword id="KW-1185">Reference proteome</keyword>
<comment type="function">
    <text evidence="1">The RuvA-RuvB-RuvC complex processes Holliday junction (HJ) DNA during genetic recombination and DNA repair, while the RuvA-RuvB complex plays an important role in the rescue of blocked DNA replication forks via replication fork reversal (RFR). RuvA specifically binds to HJ cruciform DNA, conferring on it an open structure. The RuvB hexamer acts as an ATP-dependent pump, pulling dsDNA into and through the RuvAB complex. HJ branch migration allows RuvC to scan DNA until it finds its consensus sequence, where it cleaves and resolves the cruciform DNA.</text>
</comment>
<comment type="subunit">
    <text evidence="1">Homotetramer. Forms an RuvA(8)-RuvB(12)-Holliday junction (HJ) complex. HJ DNA is sandwiched between 2 RuvA tetramers; dsDNA enters through RuvA and exits via RuvB. An RuvB hexamer assembles on each DNA strand where it exits the tetramer. Each RuvB hexamer is contacted by two RuvA subunits (via domain III) on 2 adjacent RuvB subunits; this complex drives branch migration. In the full resolvosome a probable DNA-RuvA(4)-RuvB(12)-RuvC(2) complex forms which resolves the HJ.</text>
</comment>
<comment type="subcellular location">
    <subcellularLocation>
        <location evidence="1">Cytoplasm</location>
    </subcellularLocation>
</comment>
<comment type="domain">
    <text evidence="1">Has three domains with a flexible linker between the domains II and III and assumes an 'L' shape. Domain III is highly mobile and contacts RuvB.</text>
</comment>
<comment type="similarity">
    <text evidence="1">Belongs to the RuvA family.</text>
</comment>